<gene>
    <name evidence="1" type="primary">ureA</name>
    <name type="ordered locus">FRAAL1449</name>
</gene>
<comment type="catalytic activity">
    <reaction evidence="1">
        <text>urea + 2 H2O + H(+) = hydrogencarbonate + 2 NH4(+)</text>
        <dbReference type="Rhea" id="RHEA:20557"/>
        <dbReference type="ChEBI" id="CHEBI:15377"/>
        <dbReference type="ChEBI" id="CHEBI:15378"/>
        <dbReference type="ChEBI" id="CHEBI:16199"/>
        <dbReference type="ChEBI" id="CHEBI:17544"/>
        <dbReference type="ChEBI" id="CHEBI:28938"/>
        <dbReference type="EC" id="3.5.1.5"/>
    </reaction>
</comment>
<comment type="pathway">
    <text evidence="1">Nitrogen metabolism; urea degradation; CO(2) and NH(3) from urea (urease route): step 1/1.</text>
</comment>
<comment type="subunit">
    <text evidence="1">Heterotrimer of UreA (gamma), UreB (beta) and UreC (alpha) subunits. Three heterotrimers associate to form the active enzyme.</text>
</comment>
<comment type="subcellular location">
    <subcellularLocation>
        <location evidence="1">Cytoplasm</location>
    </subcellularLocation>
</comment>
<comment type="similarity">
    <text evidence="1">Belongs to the urease gamma subunit family.</text>
</comment>
<dbReference type="EC" id="3.5.1.5" evidence="1"/>
<dbReference type="EMBL" id="CT573213">
    <property type="protein sequence ID" value="CAJ60105.1"/>
    <property type="molecule type" value="Genomic_DNA"/>
</dbReference>
<dbReference type="RefSeq" id="WP_011602639.1">
    <property type="nucleotide sequence ID" value="NC_008278.1"/>
</dbReference>
<dbReference type="SMR" id="Q0RQR8"/>
<dbReference type="STRING" id="326424.FRAAL1449"/>
<dbReference type="KEGG" id="fal:FRAAL1449"/>
<dbReference type="eggNOG" id="COG0831">
    <property type="taxonomic scope" value="Bacteria"/>
</dbReference>
<dbReference type="HOGENOM" id="CLU_145825_1_0_11"/>
<dbReference type="OrthoDB" id="9797217at2"/>
<dbReference type="UniPathway" id="UPA00258">
    <property type="reaction ID" value="UER00370"/>
</dbReference>
<dbReference type="Proteomes" id="UP000000657">
    <property type="component" value="Chromosome"/>
</dbReference>
<dbReference type="GO" id="GO:0005737">
    <property type="term" value="C:cytoplasm"/>
    <property type="evidence" value="ECO:0007669"/>
    <property type="project" value="UniProtKB-SubCell"/>
</dbReference>
<dbReference type="GO" id="GO:0016151">
    <property type="term" value="F:nickel cation binding"/>
    <property type="evidence" value="ECO:0007669"/>
    <property type="project" value="InterPro"/>
</dbReference>
<dbReference type="GO" id="GO:0009039">
    <property type="term" value="F:urease activity"/>
    <property type="evidence" value="ECO:0007669"/>
    <property type="project" value="UniProtKB-UniRule"/>
</dbReference>
<dbReference type="GO" id="GO:0043419">
    <property type="term" value="P:urea catabolic process"/>
    <property type="evidence" value="ECO:0007669"/>
    <property type="project" value="UniProtKB-UniRule"/>
</dbReference>
<dbReference type="CDD" id="cd00390">
    <property type="entry name" value="Urease_gamma"/>
    <property type="match status" value="1"/>
</dbReference>
<dbReference type="Gene3D" id="3.30.280.10">
    <property type="entry name" value="Urease, gamma-like subunit"/>
    <property type="match status" value="1"/>
</dbReference>
<dbReference type="HAMAP" id="MF_00739">
    <property type="entry name" value="Urease_gamma"/>
    <property type="match status" value="1"/>
</dbReference>
<dbReference type="InterPro" id="IPR012010">
    <property type="entry name" value="Urease_gamma"/>
</dbReference>
<dbReference type="InterPro" id="IPR002026">
    <property type="entry name" value="Urease_gamma/gamma-beta_su"/>
</dbReference>
<dbReference type="InterPro" id="IPR036463">
    <property type="entry name" value="Urease_gamma_sf"/>
</dbReference>
<dbReference type="InterPro" id="IPR050069">
    <property type="entry name" value="Urease_subunit"/>
</dbReference>
<dbReference type="NCBIfam" id="NF009712">
    <property type="entry name" value="PRK13241.1"/>
    <property type="match status" value="1"/>
</dbReference>
<dbReference type="NCBIfam" id="TIGR00193">
    <property type="entry name" value="urease_gam"/>
    <property type="match status" value="1"/>
</dbReference>
<dbReference type="PANTHER" id="PTHR33569">
    <property type="entry name" value="UREASE"/>
    <property type="match status" value="1"/>
</dbReference>
<dbReference type="PANTHER" id="PTHR33569:SF1">
    <property type="entry name" value="UREASE"/>
    <property type="match status" value="1"/>
</dbReference>
<dbReference type="Pfam" id="PF00547">
    <property type="entry name" value="Urease_gamma"/>
    <property type="match status" value="1"/>
</dbReference>
<dbReference type="PIRSF" id="PIRSF001223">
    <property type="entry name" value="Urease_gamma"/>
    <property type="match status" value="1"/>
</dbReference>
<dbReference type="SUPFAM" id="SSF54111">
    <property type="entry name" value="Urease, gamma-subunit"/>
    <property type="match status" value="1"/>
</dbReference>
<sequence length="100" mass="10892">MLLSPHEQERLLIHVAAGLARERRARGLRLNHPEATALLTSFLLEGARDGRSVADLMTAGRGVLTRDDVMEGVPEMLAEVQVEATFPDGTKLVTVHQPIA</sequence>
<proteinExistence type="inferred from homology"/>
<feature type="chain" id="PRO_1000046326" description="Urease subunit gamma">
    <location>
        <begin position="1"/>
        <end position="100"/>
    </location>
</feature>
<evidence type="ECO:0000255" key="1">
    <source>
        <dbReference type="HAMAP-Rule" id="MF_00739"/>
    </source>
</evidence>
<organism>
    <name type="scientific">Frankia alni (strain DSM 45986 / CECT 9034 / ACN14a)</name>
    <dbReference type="NCBI Taxonomy" id="326424"/>
    <lineage>
        <taxon>Bacteria</taxon>
        <taxon>Bacillati</taxon>
        <taxon>Actinomycetota</taxon>
        <taxon>Actinomycetes</taxon>
        <taxon>Frankiales</taxon>
        <taxon>Frankiaceae</taxon>
        <taxon>Frankia</taxon>
    </lineage>
</organism>
<reference key="1">
    <citation type="journal article" date="2007" name="Genome Res.">
        <title>Genome characteristics of facultatively symbiotic Frankia sp. strains reflect host range and host plant biogeography.</title>
        <authorList>
            <person name="Normand P."/>
            <person name="Lapierre P."/>
            <person name="Tisa L.S."/>
            <person name="Gogarten J.P."/>
            <person name="Alloisio N."/>
            <person name="Bagnarol E."/>
            <person name="Bassi C.A."/>
            <person name="Berry A.M."/>
            <person name="Bickhart D.M."/>
            <person name="Choisne N."/>
            <person name="Couloux A."/>
            <person name="Cournoyer B."/>
            <person name="Cruveiller S."/>
            <person name="Daubin V."/>
            <person name="Demange N."/>
            <person name="Francino M.P."/>
            <person name="Goltsman E."/>
            <person name="Huang Y."/>
            <person name="Kopp O.R."/>
            <person name="Labarre L."/>
            <person name="Lapidus A."/>
            <person name="Lavire C."/>
            <person name="Marechal J."/>
            <person name="Martinez M."/>
            <person name="Mastronunzio J.E."/>
            <person name="Mullin B.C."/>
            <person name="Niemann J."/>
            <person name="Pujic P."/>
            <person name="Rawnsley T."/>
            <person name="Rouy Z."/>
            <person name="Schenowitz C."/>
            <person name="Sellstedt A."/>
            <person name="Tavares F."/>
            <person name="Tomkins J.P."/>
            <person name="Vallenet D."/>
            <person name="Valverde C."/>
            <person name="Wall L.G."/>
            <person name="Wang Y."/>
            <person name="Medigue C."/>
            <person name="Benson D.R."/>
        </authorList>
    </citation>
    <scope>NUCLEOTIDE SEQUENCE [LARGE SCALE GENOMIC DNA]</scope>
    <source>
        <strain>DSM 45986 / CECT 9034 / ACN14a</strain>
    </source>
</reference>
<accession>Q0RQR8</accession>
<keyword id="KW-0963">Cytoplasm</keyword>
<keyword id="KW-0378">Hydrolase</keyword>
<keyword id="KW-1185">Reference proteome</keyword>
<protein>
    <recommendedName>
        <fullName evidence="1">Urease subunit gamma</fullName>
        <ecNumber evidence="1">3.5.1.5</ecNumber>
    </recommendedName>
    <alternativeName>
        <fullName evidence="1">Urea amidohydrolase subunit gamma</fullName>
    </alternativeName>
</protein>
<name>URE3_FRAAA</name>